<name>ERYB_BRUA2</name>
<evidence type="ECO:0000250" key="1">
    <source>
        <dbReference type="UniProtKB" id="P13035"/>
    </source>
</evidence>
<evidence type="ECO:0000255" key="2"/>
<evidence type="ECO:0000269" key="3">
    <source>
    </source>
</evidence>
<evidence type="ECO:0000269" key="4">
    <source>
    </source>
</evidence>
<evidence type="ECO:0000269" key="5">
    <source>
    </source>
</evidence>
<evidence type="ECO:0000303" key="6">
    <source>
    </source>
</evidence>
<evidence type="ECO:0000303" key="7">
    <source>
    </source>
</evidence>
<evidence type="ECO:0000305" key="8"/>
<evidence type="ECO:0000312" key="9">
    <source>
        <dbReference type="EMBL" id="CAJ12537.1"/>
    </source>
</evidence>
<sequence length="502" mass="56191">MAEPETCDLFVIGGGINGAGVARDAAGRGLKVVLAEKDDLAQGTSSRSGKLVHGGLRYLEYYEFRLVREALIEREVLLNAAPHIIWPMRFVLPHSPQDRPAWLVRLGLFLYDHLGGRKKLPGTRTLDLKRDPEGTPILDQYTKGFEYSDCWVDDARLVALNAVGAAEKGATILTRTPVVSARRENGGWIVETRNSDTGETRTFRARCIVNCAGPWVTDVIHNVAASTSSRNVRLVKGSHIIVPKFWSGANAYLVQNHDKRVIFINPYEGDKALIGTTDIAYEGRAEDVAADEKEIDYLITAVNRYFKEKLRREDVLHSFSGVRPLFDDGKGNPSAVTRDYVFDLDETGGAPLLNVFGGKITTFRELAERGMHRLKHIFPQMGGDWTHDAPLPGGEIANADYETFANTLRDTYPWMPRTLVHHYGRLYGARTKDVVAGAQNLEGLGRHFGGDFHEAEVRYLVAREWAKTAEDILYRRTKHYLHLTEAERAAFVEWFDNANLVA</sequence>
<reference key="1">
    <citation type="journal article" date="2000" name="Microbiology">
        <title>The genes for erythritol catabolism are organized as an inducible operon in Brucella abortus.</title>
        <authorList>
            <person name="Sangari F.J."/>
            <person name="Aguero J."/>
            <person name="Garcia-Lobo J.M."/>
        </authorList>
    </citation>
    <scope>NUCLEOTIDE SEQUENCE [GENOMIC DNA]</scope>
    <scope>INDUCTION</scope>
    <source>
        <strain>2308</strain>
    </source>
</reference>
<reference key="2">
    <citation type="journal article" date="2005" name="Infect. Immun.">
        <title>Whole-genome analyses of speciation events in pathogenic Brucellae.</title>
        <authorList>
            <person name="Chain P.S."/>
            <person name="Comerci D.J."/>
            <person name="Tolmasky M.E."/>
            <person name="Larimer F.W."/>
            <person name="Malfatti S.A."/>
            <person name="Vergez L.M."/>
            <person name="Aguero F."/>
            <person name="Land M.L."/>
            <person name="Ugalde R.A."/>
            <person name="Garcia E."/>
        </authorList>
    </citation>
    <scope>NUCLEOTIDE SEQUENCE [LARGE SCALE GENOMIC DNA]</scope>
    <source>
        <strain>2308</strain>
    </source>
</reference>
<reference key="3">
    <citation type="journal article" date="1975" name="J. Bacteriol.">
        <title>Erythritol catabolism by Brucella abortus.</title>
        <authorList>
            <person name="Sperry J.F."/>
            <person name="Robertson D.C."/>
        </authorList>
    </citation>
    <scope>FUNCTION</scope>
    <scope>CATALYTIC ACTIVITY</scope>
    <source>
        <strain>19</strain>
    </source>
</reference>
<reference key="4">
    <citation type="journal article" date="2014" name="Proc. Natl. Acad. Sci. U.S.A.">
        <title>Erythritol feeds the pentose phosphate pathway via three new isomerases leading to D-erythrose-4-phosphate in Brucella.</title>
        <authorList>
            <person name="Barbier T."/>
            <person name="Collard F."/>
            <person name="Zuniga-Ripa A."/>
            <person name="Moriyon I."/>
            <person name="Godard T."/>
            <person name="Becker J."/>
            <person name="Wittmann C."/>
            <person name="Van Schaftingen E."/>
            <person name="Letesson J.J."/>
        </authorList>
    </citation>
    <scope>FUNCTION</scope>
    <scope>CATALYTIC ACTIVITY</scope>
    <scope>PATHWAY</scope>
    <source>
        <strain>2308</strain>
    </source>
</reference>
<feature type="chain" id="PRO_0000446538" description="D-erythritol 1-phosphate dehydrogenase">
    <location>
        <begin position="1"/>
        <end position="502"/>
    </location>
</feature>
<feature type="binding site" evidence="2">
    <location>
        <begin position="8"/>
        <end position="36"/>
    </location>
    <ligand>
        <name>FAD</name>
        <dbReference type="ChEBI" id="CHEBI:57692"/>
    </ligand>
</feature>
<feature type="sequence conflict" description="In Ref. 1; AAD11520." evidence="8" ref="1">
    <original>R</original>
    <variation>A</variation>
    <location>
        <position position="47"/>
    </location>
</feature>
<feature type="sequence conflict" description="In Ref. 1; AAD11520." evidence="8" ref="1">
    <original>D</original>
    <variation>I</variation>
    <location>
        <position position="98"/>
    </location>
</feature>
<feature type="sequence conflict" description="In Ref. 1; AAD11520." evidence="8" ref="1">
    <original>AEKGA</original>
    <variation>RRKGS</variation>
    <location>
        <begin position="166"/>
        <end position="170"/>
    </location>
</feature>
<keyword id="KW-0274">FAD</keyword>
<keyword id="KW-0285">Flavoprotein</keyword>
<keyword id="KW-0521">NADP</keyword>
<keyword id="KW-0560">Oxidoreductase</keyword>
<keyword id="KW-1185">Reference proteome</keyword>
<dbReference type="EC" id="1.1.1.402" evidence="4 5"/>
<dbReference type="EMBL" id="U57100">
    <property type="protein sequence ID" value="AAD11520.1"/>
    <property type="molecule type" value="Genomic_DNA"/>
</dbReference>
<dbReference type="EMBL" id="AM040265">
    <property type="protein sequence ID" value="CAJ12537.1"/>
    <property type="molecule type" value="Genomic_DNA"/>
</dbReference>
<dbReference type="RefSeq" id="WP_002965781.1">
    <property type="nucleotide sequence ID" value="NZ_KN046823.1"/>
</dbReference>
<dbReference type="SMR" id="Q2YIQ2"/>
<dbReference type="STRING" id="359391.BAB2_0371"/>
<dbReference type="KEGG" id="bmf:BAB2_0371"/>
<dbReference type="PATRIC" id="fig|359391.11.peg.2323"/>
<dbReference type="HOGENOM" id="CLU_015740_5_0_5"/>
<dbReference type="PhylomeDB" id="Q2YIQ2"/>
<dbReference type="BioCyc" id="MetaCyc:MONOMER-19885"/>
<dbReference type="UniPathway" id="UPA01066"/>
<dbReference type="PRO" id="PR:Q2YIQ2"/>
<dbReference type="Proteomes" id="UP000002719">
    <property type="component" value="Chromosome II"/>
</dbReference>
<dbReference type="GO" id="GO:0004368">
    <property type="term" value="F:glycerol-3-phosphate dehydrogenase (quinone) activity"/>
    <property type="evidence" value="ECO:0007669"/>
    <property type="project" value="InterPro"/>
</dbReference>
<dbReference type="GO" id="GO:0046168">
    <property type="term" value="P:glycerol-3-phosphate catabolic process"/>
    <property type="evidence" value="ECO:0007669"/>
    <property type="project" value="TreeGrafter"/>
</dbReference>
<dbReference type="Gene3D" id="1.10.8.870">
    <property type="entry name" value="Alpha-glycerophosphate oxidase, cap domain"/>
    <property type="match status" value="1"/>
</dbReference>
<dbReference type="Gene3D" id="3.30.9.10">
    <property type="entry name" value="D-Amino Acid Oxidase, subunit A, domain 2"/>
    <property type="match status" value="1"/>
</dbReference>
<dbReference type="Gene3D" id="3.50.50.60">
    <property type="entry name" value="FAD/NAD(P)-binding domain"/>
    <property type="match status" value="1"/>
</dbReference>
<dbReference type="InterPro" id="IPR031656">
    <property type="entry name" value="DAO_C"/>
</dbReference>
<dbReference type="InterPro" id="IPR038299">
    <property type="entry name" value="DAO_C_sf"/>
</dbReference>
<dbReference type="InterPro" id="IPR006076">
    <property type="entry name" value="FAD-dep_OxRdtase"/>
</dbReference>
<dbReference type="InterPro" id="IPR036188">
    <property type="entry name" value="FAD/NAD-bd_sf"/>
</dbReference>
<dbReference type="InterPro" id="IPR000447">
    <property type="entry name" value="G3P_DH_FAD-dep"/>
</dbReference>
<dbReference type="NCBIfam" id="NF008899">
    <property type="entry name" value="PRK12266.1"/>
    <property type="match status" value="1"/>
</dbReference>
<dbReference type="NCBIfam" id="NF009906">
    <property type="entry name" value="PRK13369.1"/>
    <property type="match status" value="1"/>
</dbReference>
<dbReference type="PANTHER" id="PTHR11985">
    <property type="entry name" value="GLYCEROL-3-PHOSPHATE DEHYDROGENASE"/>
    <property type="match status" value="1"/>
</dbReference>
<dbReference type="PANTHER" id="PTHR11985:SF15">
    <property type="entry name" value="GLYCEROL-3-PHOSPHATE DEHYDROGENASE, MITOCHONDRIAL"/>
    <property type="match status" value="1"/>
</dbReference>
<dbReference type="Pfam" id="PF01266">
    <property type="entry name" value="DAO"/>
    <property type="match status" value="1"/>
</dbReference>
<dbReference type="Pfam" id="PF16901">
    <property type="entry name" value="DAO_C"/>
    <property type="match status" value="1"/>
</dbReference>
<dbReference type="PRINTS" id="PR01001">
    <property type="entry name" value="FADG3PDH"/>
</dbReference>
<dbReference type="SUPFAM" id="SSF54373">
    <property type="entry name" value="FAD-linked reductases, C-terminal domain"/>
    <property type="match status" value="1"/>
</dbReference>
<dbReference type="SUPFAM" id="SSF51905">
    <property type="entry name" value="FAD/NAD(P)-binding domain"/>
    <property type="match status" value="1"/>
</dbReference>
<dbReference type="PROSITE" id="PS00977">
    <property type="entry name" value="FAD_G3PDH_1"/>
    <property type="match status" value="1"/>
</dbReference>
<proteinExistence type="evidence at protein level"/>
<protein>
    <recommendedName>
        <fullName evidence="7">D-erythritol 1-phosphate dehydrogenase</fullName>
        <ecNumber evidence="4 5">1.1.1.402</ecNumber>
    </recommendedName>
</protein>
<comment type="function">
    <text evidence="4 5">Catalyzes the oxydation of D-erythritol 1-phosphate to D-erythrulose 1-phosphate.</text>
</comment>
<comment type="catalytic activity">
    <reaction evidence="4 5">
        <text>D-erythritol 1-phosphate + NADP(+) = D-erythrulose 1-phosphate + NADPH + H(+)</text>
        <dbReference type="Rhea" id="RHEA:49620"/>
        <dbReference type="ChEBI" id="CHEBI:15378"/>
        <dbReference type="ChEBI" id="CHEBI:57783"/>
        <dbReference type="ChEBI" id="CHEBI:58349"/>
        <dbReference type="ChEBI" id="CHEBI:131767"/>
        <dbReference type="ChEBI" id="CHEBI:131849"/>
        <dbReference type="EC" id="1.1.1.402"/>
    </reaction>
</comment>
<comment type="cofactor">
    <cofactor evidence="1">
        <name>FAD</name>
        <dbReference type="ChEBI" id="CHEBI:57692"/>
    </cofactor>
</comment>
<comment type="pathway">
    <text evidence="5">Carbohydrate metabolism; erythritol degradation.</text>
</comment>
<comment type="induction">
    <text evidence="3">Induced by erythritol and repressed by EryD.</text>
</comment>
<comment type="similarity">
    <text evidence="8">Belongs to the FAD-dependent glycerol-3-phosphate dehydrogenase family.</text>
</comment>
<accession>Q2YIQ2</accession>
<accession>Q9ZB31</accession>
<organism>
    <name type="scientific">Brucella abortus (strain 2308)</name>
    <dbReference type="NCBI Taxonomy" id="359391"/>
    <lineage>
        <taxon>Bacteria</taxon>
        <taxon>Pseudomonadati</taxon>
        <taxon>Pseudomonadota</taxon>
        <taxon>Alphaproteobacteria</taxon>
        <taxon>Hyphomicrobiales</taxon>
        <taxon>Brucellaceae</taxon>
        <taxon>Brucella/Ochrobactrum group</taxon>
        <taxon>Brucella</taxon>
    </lineage>
</organism>
<gene>
    <name evidence="6" type="primary">eryB</name>
    <name evidence="9" type="ordered locus">BAB2_0371</name>
</gene>